<gene>
    <name evidence="1" type="primary">erpA</name>
    <name type="ordered locus">SG0501</name>
</gene>
<keyword id="KW-0408">Iron</keyword>
<keyword id="KW-0411">Iron-sulfur</keyword>
<keyword id="KW-0479">Metal-binding</keyword>
<dbReference type="EMBL" id="AP008232">
    <property type="protein sequence ID" value="BAE73776.1"/>
    <property type="molecule type" value="Genomic_DNA"/>
</dbReference>
<dbReference type="RefSeq" id="WP_011410474.1">
    <property type="nucleotide sequence ID" value="NC_007712.1"/>
</dbReference>
<dbReference type="SMR" id="Q2NVP9"/>
<dbReference type="STRING" id="343509.SG0501"/>
<dbReference type="KEGG" id="sgl:SG0501"/>
<dbReference type="eggNOG" id="COG0316">
    <property type="taxonomic scope" value="Bacteria"/>
</dbReference>
<dbReference type="HOGENOM" id="CLU_069054_5_3_6"/>
<dbReference type="OrthoDB" id="9801228at2"/>
<dbReference type="BioCyc" id="SGLO343509:SGP1_RS04470-MONOMER"/>
<dbReference type="Proteomes" id="UP000001932">
    <property type="component" value="Chromosome"/>
</dbReference>
<dbReference type="GO" id="GO:0005829">
    <property type="term" value="C:cytosol"/>
    <property type="evidence" value="ECO:0007669"/>
    <property type="project" value="TreeGrafter"/>
</dbReference>
<dbReference type="GO" id="GO:0051537">
    <property type="term" value="F:2 iron, 2 sulfur cluster binding"/>
    <property type="evidence" value="ECO:0007669"/>
    <property type="project" value="TreeGrafter"/>
</dbReference>
<dbReference type="GO" id="GO:0051539">
    <property type="term" value="F:4 iron, 4 sulfur cluster binding"/>
    <property type="evidence" value="ECO:0007669"/>
    <property type="project" value="TreeGrafter"/>
</dbReference>
<dbReference type="GO" id="GO:0005506">
    <property type="term" value="F:iron ion binding"/>
    <property type="evidence" value="ECO:0007669"/>
    <property type="project" value="UniProtKB-UniRule"/>
</dbReference>
<dbReference type="GO" id="GO:0016226">
    <property type="term" value="P:iron-sulfur cluster assembly"/>
    <property type="evidence" value="ECO:0007669"/>
    <property type="project" value="UniProtKB-UniRule"/>
</dbReference>
<dbReference type="FunFam" id="2.60.300.12:FF:000002">
    <property type="entry name" value="Iron-sulfur cluster insertion protein ErpA"/>
    <property type="match status" value="1"/>
</dbReference>
<dbReference type="Gene3D" id="2.60.300.12">
    <property type="entry name" value="HesB-like domain"/>
    <property type="match status" value="1"/>
</dbReference>
<dbReference type="HAMAP" id="MF_01380">
    <property type="entry name" value="Fe_S_insert_ErpA"/>
    <property type="match status" value="1"/>
</dbReference>
<dbReference type="InterPro" id="IPR000361">
    <property type="entry name" value="FeS_biogenesis"/>
</dbReference>
<dbReference type="InterPro" id="IPR016092">
    <property type="entry name" value="FeS_cluster_insertion"/>
</dbReference>
<dbReference type="InterPro" id="IPR017870">
    <property type="entry name" value="FeS_cluster_insertion_CS"/>
</dbReference>
<dbReference type="InterPro" id="IPR023063">
    <property type="entry name" value="FeS_cluster_insertion_RrpA"/>
</dbReference>
<dbReference type="InterPro" id="IPR035903">
    <property type="entry name" value="HesB-like_dom_sf"/>
</dbReference>
<dbReference type="NCBIfam" id="TIGR00049">
    <property type="entry name" value="iron-sulfur cluster assembly accessory protein"/>
    <property type="match status" value="1"/>
</dbReference>
<dbReference type="NCBIfam" id="NF010147">
    <property type="entry name" value="PRK13623.1"/>
    <property type="match status" value="1"/>
</dbReference>
<dbReference type="PANTHER" id="PTHR43011">
    <property type="entry name" value="IRON-SULFUR CLUSTER ASSEMBLY 2 HOMOLOG, MITOCHONDRIAL"/>
    <property type="match status" value="1"/>
</dbReference>
<dbReference type="PANTHER" id="PTHR43011:SF1">
    <property type="entry name" value="IRON-SULFUR CLUSTER ASSEMBLY 2 HOMOLOG, MITOCHONDRIAL"/>
    <property type="match status" value="1"/>
</dbReference>
<dbReference type="Pfam" id="PF01521">
    <property type="entry name" value="Fe-S_biosyn"/>
    <property type="match status" value="1"/>
</dbReference>
<dbReference type="SUPFAM" id="SSF89360">
    <property type="entry name" value="HesB-like domain"/>
    <property type="match status" value="1"/>
</dbReference>
<dbReference type="PROSITE" id="PS01152">
    <property type="entry name" value="HESB"/>
    <property type="match status" value="1"/>
</dbReference>
<organism>
    <name type="scientific">Sodalis glossinidius (strain morsitans)</name>
    <dbReference type="NCBI Taxonomy" id="343509"/>
    <lineage>
        <taxon>Bacteria</taxon>
        <taxon>Pseudomonadati</taxon>
        <taxon>Pseudomonadota</taxon>
        <taxon>Gammaproteobacteria</taxon>
        <taxon>Enterobacterales</taxon>
        <taxon>Bruguierivoracaceae</taxon>
        <taxon>Sodalis</taxon>
    </lineage>
</organism>
<evidence type="ECO:0000255" key="1">
    <source>
        <dbReference type="HAMAP-Rule" id="MF_01380"/>
    </source>
</evidence>
<sequence length="114" mass="12248">MSETATLPLRFTDSAASKVKNLIADEENPNLKLRVYITGGGCSGFQYGFTFDDKVNEDDFTIEKQGVALVVDPMSLQYLVGGSVDYSEGLEGSRFIVTNPNAKTTCGCGSSFSI</sequence>
<reference key="1">
    <citation type="journal article" date="2006" name="Genome Res.">
        <title>Massive genome erosion and functional adaptations provide insights into the symbiotic lifestyle of Sodalis glossinidius in the tsetse host.</title>
        <authorList>
            <person name="Toh H."/>
            <person name="Weiss B.L."/>
            <person name="Perkin S.A.H."/>
            <person name="Yamashita A."/>
            <person name="Oshima K."/>
            <person name="Hattori M."/>
            <person name="Aksoy S."/>
        </authorList>
    </citation>
    <scope>NUCLEOTIDE SEQUENCE [LARGE SCALE GENOMIC DNA]</scope>
    <source>
        <strain>morsitans</strain>
    </source>
</reference>
<accession>Q2NVP9</accession>
<comment type="function">
    <text evidence="1">Required for insertion of 4Fe-4S clusters for at least IspG.</text>
</comment>
<comment type="cofactor">
    <cofactor evidence="1">
        <name>iron-sulfur cluster</name>
        <dbReference type="ChEBI" id="CHEBI:30408"/>
    </cofactor>
    <text evidence="1">Binds 1 iron-sulfur cluster per subunit.</text>
</comment>
<comment type="subunit">
    <text evidence="1">Homodimer.</text>
</comment>
<comment type="similarity">
    <text evidence="1">Belongs to the HesB/IscA family.</text>
</comment>
<protein>
    <recommendedName>
        <fullName evidence="1">Iron-sulfur cluster insertion protein ErpA</fullName>
    </recommendedName>
</protein>
<name>ERPA_SODGM</name>
<proteinExistence type="inferred from homology"/>
<feature type="chain" id="PRO_0000311563" description="Iron-sulfur cluster insertion protein ErpA">
    <location>
        <begin position="1"/>
        <end position="114"/>
    </location>
</feature>
<feature type="binding site" evidence="1">
    <location>
        <position position="42"/>
    </location>
    <ligand>
        <name>iron-sulfur cluster</name>
        <dbReference type="ChEBI" id="CHEBI:30408"/>
    </ligand>
</feature>
<feature type="binding site" evidence="1">
    <location>
        <position position="106"/>
    </location>
    <ligand>
        <name>iron-sulfur cluster</name>
        <dbReference type="ChEBI" id="CHEBI:30408"/>
    </ligand>
</feature>
<feature type="binding site" evidence="1">
    <location>
        <position position="108"/>
    </location>
    <ligand>
        <name>iron-sulfur cluster</name>
        <dbReference type="ChEBI" id="CHEBI:30408"/>
    </ligand>
</feature>